<comment type="subunit">
    <text evidence="1">Part of the 50S ribosomal subunit.</text>
</comment>
<comment type="subcellular location">
    <subcellularLocation>
        <location>Plastid</location>
        <location>Chloroplast</location>
    </subcellularLocation>
</comment>
<comment type="similarity">
    <text evidence="4">Belongs to the universal ribosomal protein uL2 family.</text>
</comment>
<evidence type="ECO:0000250" key="1"/>
<evidence type="ECO:0000255" key="2">
    <source>
        <dbReference type="HAMAP-Rule" id="MF_01320"/>
    </source>
</evidence>
<evidence type="ECO:0000256" key="3">
    <source>
        <dbReference type="SAM" id="MobiDB-lite"/>
    </source>
</evidence>
<evidence type="ECO:0000305" key="4"/>
<keyword id="KW-0150">Chloroplast</keyword>
<keyword id="KW-0934">Plastid</keyword>
<keyword id="KW-0687">Ribonucleoprotein</keyword>
<keyword id="KW-0689">Ribosomal protein</keyword>
<proteinExistence type="inferred from homology"/>
<sequence>MAIRSYRILTPDTRNRSVSGFDGRVQLDPQKKLTSGQHHCGKGRNGRGIITARHRGGGHKRLYRQIDFRRNKEHISGEIVTIEYDPNRSAYICKVHYKNGDKMYILHPRGVMIGDTILSGPKAPISIGNALPLTNMPLGTAIHNIEITLGKGGQLARAAGAVAELIAKEDRSATLRLPSGEVRLISENCSATIGQVGNITANNRSFGKAGAKRWLGKRSEVRGVAMNPVDHPHGGGEGRTPIGRKKPVTPWGYSALGKKSRKRNRYSDASILRRRE</sequence>
<dbReference type="EMBL" id="D17510">
    <property type="protein sequence ID" value="BAA23474.1"/>
    <property type="molecule type" value="Genomic_DNA"/>
</dbReference>
<dbReference type="PIR" id="T07531">
    <property type="entry name" value="T07531"/>
</dbReference>
<dbReference type="RefSeq" id="NP_042450.1">
    <property type="nucleotide sequence ID" value="NC_001631.1"/>
</dbReference>
<dbReference type="SMR" id="O62940"/>
<dbReference type="GeneID" id="809058"/>
<dbReference type="GO" id="GO:0009507">
    <property type="term" value="C:chloroplast"/>
    <property type="evidence" value="ECO:0007669"/>
    <property type="project" value="UniProtKB-SubCell"/>
</dbReference>
<dbReference type="GO" id="GO:0005762">
    <property type="term" value="C:mitochondrial large ribosomal subunit"/>
    <property type="evidence" value="ECO:0007669"/>
    <property type="project" value="TreeGrafter"/>
</dbReference>
<dbReference type="GO" id="GO:0019843">
    <property type="term" value="F:rRNA binding"/>
    <property type="evidence" value="ECO:0007669"/>
    <property type="project" value="UniProtKB-UniRule"/>
</dbReference>
<dbReference type="GO" id="GO:0003735">
    <property type="term" value="F:structural constituent of ribosome"/>
    <property type="evidence" value="ECO:0007669"/>
    <property type="project" value="InterPro"/>
</dbReference>
<dbReference type="GO" id="GO:0016740">
    <property type="term" value="F:transferase activity"/>
    <property type="evidence" value="ECO:0007669"/>
    <property type="project" value="InterPro"/>
</dbReference>
<dbReference type="GO" id="GO:0032543">
    <property type="term" value="P:mitochondrial translation"/>
    <property type="evidence" value="ECO:0007669"/>
    <property type="project" value="TreeGrafter"/>
</dbReference>
<dbReference type="FunFam" id="4.10.950.10:FF:000001">
    <property type="entry name" value="50S ribosomal protein L2"/>
    <property type="match status" value="1"/>
</dbReference>
<dbReference type="FunFam" id="2.30.30.30:FF:000008">
    <property type="entry name" value="50S ribosomal protein L2, chloroplastic"/>
    <property type="match status" value="1"/>
</dbReference>
<dbReference type="FunFam" id="2.40.50.140:FF:000029">
    <property type="entry name" value="50S ribosomal protein L2, chloroplastic"/>
    <property type="match status" value="1"/>
</dbReference>
<dbReference type="Gene3D" id="2.30.30.30">
    <property type="match status" value="1"/>
</dbReference>
<dbReference type="Gene3D" id="2.40.50.140">
    <property type="entry name" value="Nucleic acid-binding proteins"/>
    <property type="match status" value="1"/>
</dbReference>
<dbReference type="Gene3D" id="4.10.950.10">
    <property type="entry name" value="Ribosomal protein L2, domain 3"/>
    <property type="match status" value="1"/>
</dbReference>
<dbReference type="HAMAP" id="MF_01320_B">
    <property type="entry name" value="Ribosomal_uL2_B"/>
    <property type="match status" value="1"/>
</dbReference>
<dbReference type="InterPro" id="IPR012340">
    <property type="entry name" value="NA-bd_OB-fold"/>
</dbReference>
<dbReference type="InterPro" id="IPR014722">
    <property type="entry name" value="Rib_uL2_dom2"/>
</dbReference>
<dbReference type="InterPro" id="IPR002171">
    <property type="entry name" value="Ribosomal_uL2"/>
</dbReference>
<dbReference type="InterPro" id="IPR005880">
    <property type="entry name" value="Ribosomal_uL2_bac/org-type"/>
</dbReference>
<dbReference type="InterPro" id="IPR022669">
    <property type="entry name" value="Ribosomal_uL2_C"/>
</dbReference>
<dbReference type="InterPro" id="IPR014726">
    <property type="entry name" value="Ribosomal_uL2_dom3"/>
</dbReference>
<dbReference type="InterPro" id="IPR022666">
    <property type="entry name" value="Ribosomal_uL2_RNA-bd_dom"/>
</dbReference>
<dbReference type="InterPro" id="IPR008991">
    <property type="entry name" value="Translation_prot_SH3-like_sf"/>
</dbReference>
<dbReference type="NCBIfam" id="TIGR01171">
    <property type="entry name" value="rplB_bact"/>
    <property type="match status" value="1"/>
</dbReference>
<dbReference type="PANTHER" id="PTHR13691:SF5">
    <property type="entry name" value="LARGE RIBOSOMAL SUBUNIT PROTEIN UL2M"/>
    <property type="match status" value="1"/>
</dbReference>
<dbReference type="PANTHER" id="PTHR13691">
    <property type="entry name" value="RIBOSOMAL PROTEIN L2"/>
    <property type="match status" value="1"/>
</dbReference>
<dbReference type="Pfam" id="PF00181">
    <property type="entry name" value="Ribosomal_L2"/>
    <property type="match status" value="1"/>
</dbReference>
<dbReference type="Pfam" id="PF03947">
    <property type="entry name" value="Ribosomal_L2_C"/>
    <property type="match status" value="1"/>
</dbReference>
<dbReference type="PIRSF" id="PIRSF002158">
    <property type="entry name" value="Ribosomal_L2"/>
    <property type="match status" value="1"/>
</dbReference>
<dbReference type="SMART" id="SM01383">
    <property type="entry name" value="Ribosomal_L2"/>
    <property type="match status" value="1"/>
</dbReference>
<dbReference type="SMART" id="SM01382">
    <property type="entry name" value="Ribosomal_L2_C"/>
    <property type="match status" value="1"/>
</dbReference>
<dbReference type="SUPFAM" id="SSF50249">
    <property type="entry name" value="Nucleic acid-binding proteins"/>
    <property type="match status" value="1"/>
</dbReference>
<dbReference type="SUPFAM" id="SSF50104">
    <property type="entry name" value="Translation proteins SH3-like domain"/>
    <property type="match status" value="1"/>
</dbReference>
<organism>
    <name type="scientific">Pinus thunbergii</name>
    <name type="common">Japanese black pine</name>
    <name type="synonym">Pinus thunbergiana</name>
    <dbReference type="NCBI Taxonomy" id="3350"/>
    <lineage>
        <taxon>Eukaryota</taxon>
        <taxon>Viridiplantae</taxon>
        <taxon>Streptophyta</taxon>
        <taxon>Embryophyta</taxon>
        <taxon>Tracheophyta</taxon>
        <taxon>Spermatophyta</taxon>
        <taxon>Pinopsida</taxon>
        <taxon>Pinidae</taxon>
        <taxon>Conifers I</taxon>
        <taxon>Pinales</taxon>
        <taxon>Pinaceae</taxon>
        <taxon>Pinus</taxon>
        <taxon>Pinus subgen. Pinus</taxon>
    </lineage>
</organism>
<feature type="chain" id="PRO_0000129697" description="Large ribosomal subunit protein uL2c">
    <location>
        <begin position="1"/>
        <end position="276"/>
    </location>
</feature>
<feature type="region of interest" description="Disordered" evidence="3">
    <location>
        <begin position="225"/>
        <end position="276"/>
    </location>
</feature>
<reference key="1">
    <citation type="journal article" date="1994" name="Proc. Natl. Acad. Sci. U.S.A.">
        <title>Loss of all ndh genes as determined by sequencing the entire chloroplast genome of the black pine Pinus thunbergii.</title>
        <authorList>
            <person name="Wakasugi T."/>
            <person name="Tsudzuki J."/>
            <person name="Ito S."/>
            <person name="Nakashima K."/>
            <person name="Tsudzuki T."/>
            <person name="Sugiura M."/>
        </authorList>
    </citation>
    <scope>NUCLEOTIDE SEQUENCE [LARGE SCALE GENOMIC DNA]</scope>
</reference>
<accession>O62940</accession>
<geneLocation type="chloroplast"/>
<name>RK2_PINTH</name>
<protein>
    <recommendedName>
        <fullName evidence="2">Large ribosomal subunit protein uL2c</fullName>
    </recommendedName>
    <alternativeName>
        <fullName evidence="4">50S ribosomal protein L2, chloroplastic</fullName>
    </alternativeName>
</protein>
<gene>
    <name type="primary">rpl2</name>
</gene>